<protein>
    <recommendedName>
        <fullName evidence="1">Ribosomal RNA small subunit methyltransferase G</fullName>
        <ecNumber evidence="1">2.1.1.-</ecNumber>
    </recommendedName>
    <alternativeName>
        <fullName evidence="1">16S rRNA 7-methylguanosine methyltransferase</fullName>
        <shortName evidence="1">16S rRNA m7G methyltransferase</shortName>
    </alternativeName>
</protein>
<comment type="function">
    <text evidence="1">Specifically methylates the N7 position of guanine in position 518 of 16S rRNA.</text>
</comment>
<comment type="subcellular location">
    <subcellularLocation>
        <location evidence="1">Cytoplasm</location>
    </subcellularLocation>
</comment>
<comment type="similarity">
    <text evidence="1">Belongs to the methyltransferase superfamily. RNA methyltransferase RsmG family.</text>
</comment>
<reference key="1">
    <citation type="submission" date="2007-10" db="EMBL/GenBank/DDBJ databases">
        <title>Complete sequence of Salinispora arenicola CNS-205.</title>
        <authorList>
            <consortium name="US DOE Joint Genome Institute"/>
            <person name="Copeland A."/>
            <person name="Lucas S."/>
            <person name="Lapidus A."/>
            <person name="Barry K."/>
            <person name="Glavina del Rio T."/>
            <person name="Dalin E."/>
            <person name="Tice H."/>
            <person name="Pitluck S."/>
            <person name="Foster B."/>
            <person name="Schmutz J."/>
            <person name="Larimer F."/>
            <person name="Land M."/>
            <person name="Hauser L."/>
            <person name="Kyrpides N."/>
            <person name="Ivanova N."/>
            <person name="Jensen P.R."/>
            <person name="Moore B.S."/>
            <person name="Penn K."/>
            <person name="Jenkins C."/>
            <person name="Udwary D."/>
            <person name="Xiang L."/>
            <person name="Gontang E."/>
            <person name="Richardson P."/>
        </authorList>
    </citation>
    <scope>NUCLEOTIDE SEQUENCE [LARGE SCALE GENOMIC DNA]</scope>
    <source>
        <strain>CNS-205</strain>
    </source>
</reference>
<dbReference type="EC" id="2.1.1.-" evidence="1"/>
<dbReference type="EMBL" id="CP000850">
    <property type="protein sequence ID" value="ABW00849.1"/>
    <property type="molecule type" value="Genomic_DNA"/>
</dbReference>
<dbReference type="SMR" id="A8LXK0"/>
<dbReference type="STRING" id="391037.Sare_5106"/>
<dbReference type="KEGG" id="saq:Sare_5106"/>
<dbReference type="PATRIC" id="fig|391037.6.peg.5154"/>
<dbReference type="eggNOG" id="COG0357">
    <property type="taxonomic scope" value="Bacteria"/>
</dbReference>
<dbReference type="HOGENOM" id="CLU_065341_5_0_11"/>
<dbReference type="OrthoDB" id="9808773at2"/>
<dbReference type="GO" id="GO:0005829">
    <property type="term" value="C:cytosol"/>
    <property type="evidence" value="ECO:0007669"/>
    <property type="project" value="TreeGrafter"/>
</dbReference>
<dbReference type="GO" id="GO:0070043">
    <property type="term" value="F:rRNA (guanine-N7-)-methyltransferase activity"/>
    <property type="evidence" value="ECO:0007669"/>
    <property type="project" value="UniProtKB-UniRule"/>
</dbReference>
<dbReference type="CDD" id="cd02440">
    <property type="entry name" value="AdoMet_MTases"/>
    <property type="match status" value="1"/>
</dbReference>
<dbReference type="Gene3D" id="3.40.50.150">
    <property type="entry name" value="Vaccinia Virus protein VP39"/>
    <property type="match status" value="1"/>
</dbReference>
<dbReference type="HAMAP" id="MF_00074">
    <property type="entry name" value="16SrRNA_methyltr_G"/>
    <property type="match status" value="1"/>
</dbReference>
<dbReference type="InterPro" id="IPR003682">
    <property type="entry name" value="rRNA_ssu_MeTfrase_G"/>
</dbReference>
<dbReference type="InterPro" id="IPR029063">
    <property type="entry name" value="SAM-dependent_MTases_sf"/>
</dbReference>
<dbReference type="NCBIfam" id="TIGR00138">
    <property type="entry name" value="rsmG_gidB"/>
    <property type="match status" value="1"/>
</dbReference>
<dbReference type="PANTHER" id="PTHR31760">
    <property type="entry name" value="S-ADENOSYL-L-METHIONINE-DEPENDENT METHYLTRANSFERASES SUPERFAMILY PROTEIN"/>
    <property type="match status" value="1"/>
</dbReference>
<dbReference type="PANTHER" id="PTHR31760:SF0">
    <property type="entry name" value="S-ADENOSYL-L-METHIONINE-DEPENDENT METHYLTRANSFERASES SUPERFAMILY PROTEIN"/>
    <property type="match status" value="1"/>
</dbReference>
<dbReference type="Pfam" id="PF02527">
    <property type="entry name" value="GidB"/>
    <property type="match status" value="1"/>
</dbReference>
<dbReference type="SUPFAM" id="SSF53335">
    <property type="entry name" value="S-adenosyl-L-methionine-dependent methyltransferases"/>
    <property type="match status" value="1"/>
</dbReference>
<name>RSMG_SALAI</name>
<gene>
    <name evidence="1" type="primary">rsmG</name>
    <name type="ordered locus">Sare_5106</name>
</gene>
<organism>
    <name type="scientific">Salinispora arenicola (strain CNS-205)</name>
    <dbReference type="NCBI Taxonomy" id="391037"/>
    <lineage>
        <taxon>Bacteria</taxon>
        <taxon>Bacillati</taxon>
        <taxon>Actinomycetota</taxon>
        <taxon>Actinomycetes</taxon>
        <taxon>Micromonosporales</taxon>
        <taxon>Micromonosporaceae</taxon>
        <taxon>Salinispora</taxon>
    </lineage>
</organism>
<accession>A8LXK0</accession>
<evidence type="ECO:0000255" key="1">
    <source>
        <dbReference type="HAMAP-Rule" id="MF_00074"/>
    </source>
</evidence>
<proteinExistence type="inferred from homology"/>
<sequence>MPGPVDATPPPELATAARTLFGDRLDLAVAYAGLLVTDGVIRGLIGPREAPRLWDRHLLNCAAATERIPLGATVVDVGSGAGLPGLVLAVARPDLSVVLVEPLARRTAFLVEAVEQLELGASVRVVRGRAEEVAVGGAGVEPLTGDVVTARAVAPLDRLARWCLPLVVPGGRMVALKGASAAGEAAEHAAVVQRLGGGAPEVHQCGVGVVEPPTTVIEIRRERVVATPRPASAKRSRGGRRG</sequence>
<keyword id="KW-0963">Cytoplasm</keyword>
<keyword id="KW-0489">Methyltransferase</keyword>
<keyword id="KW-0698">rRNA processing</keyword>
<keyword id="KW-0949">S-adenosyl-L-methionine</keyword>
<keyword id="KW-0808">Transferase</keyword>
<feature type="chain" id="PRO_0000335424" description="Ribosomal RNA small subunit methyltransferase G">
    <location>
        <begin position="1"/>
        <end position="242"/>
    </location>
</feature>
<feature type="binding site" evidence="1">
    <location>
        <position position="78"/>
    </location>
    <ligand>
        <name>S-adenosyl-L-methionine</name>
        <dbReference type="ChEBI" id="CHEBI:59789"/>
    </ligand>
</feature>
<feature type="binding site" evidence="1">
    <location>
        <position position="83"/>
    </location>
    <ligand>
        <name>S-adenosyl-L-methionine</name>
        <dbReference type="ChEBI" id="CHEBI:59789"/>
    </ligand>
</feature>
<feature type="binding site" evidence="1">
    <location>
        <begin position="130"/>
        <end position="131"/>
    </location>
    <ligand>
        <name>S-adenosyl-L-methionine</name>
        <dbReference type="ChEBI" id="CHEBI:59789"/>
    </ligand>
</feature>
<feature type="binding site" evidence="1">
    <location>
        <position position="151"/>
    </location>
    <ligand>
        <name>S-adenosyl-L-methionine</name>
        <dbReference type="ChEBI" id="CHEBI:59789"/>
    </ligand>
</feature>